<protein>
    <recommendedName>
        <fullName evidence="1">UDP-3-O-acylglucosamine N-acyltransferase</fullName>
        <ecNumber evidence="1">2.3.1.191</ecNumber>
    </recommendedName>
</protein>
<reference key="1">
    <citation type="submission" date="2003-03" db="EMBL/GenBank/DDBJ databases">
        <title>The complete genome sequence of Neisseria gonorrhoeae.</title>
        <authorList>
            <person name="Lewis L.A."/>
            <person name="Gillaspy A.F."/>
            <person name="McLaughlin R.E."/>
            <person name="Gipson M."/>
            <person name="Ducey T.F."/>
            <person name="Ownbey T."/>
            <person name="Hartman K."/>
            <person name="Nydick C."/>
            <person name="Carson M.B."/>
            <person name="Vaughn J."/>
            <person name="Thomson C."/>
            <person name="Song L."/>
            <person name="Lin S."/>
            <person name="Yuan X."/>
            <person name="Najar F."/>
            <person name="Zhan M."/>
            <person name="Ren Q."/>
            <person name="Zhu H."/>
            <person name="Qi S."/>
            <person name="Kenton S.M."/>
            <person name="Lai H."/>
            <person name="White J.D."/>
            <person name="Clifton S."/>
            <person name="Roe B.A."/>
            <person name="Dyer D.W."/>
        </authorList>
    </citation>
    <scope>NUCLEOTIDE SEQUENCE [LARGE SCALE GENOMIC DNA]</scope>
    <source>
        <strain>ATCC 700825 / FA 1090</strain>
    </source>
</reference>
<evidence type="ECO:0000255" key="1">
    <source>
        <dbReference type="HAMAP-Rule" id="MF_00523"/>
    </source>
</evidence>
<proteinExistence type="inferred from homology"/>
<comment type="function">
    <text evidence="1">Catalyzes the N-acylation of UDP-3-O-acylglucosamine using 3-hydroxyacyl-ACP as the acyl donor. Is involved in the biosynthesis of lipid A, a phosphorylated glycolipid that anchors the lipopolysaccharide to the outer membrane of the cell.</text>
</comment>
<comment type="catalytic activity">
    <reaction evidence="1">
        <text>a UDP-3-O-[(3R)-3-hydroxyacyl]-alpha-D-glucosamine + a (3R)-hydroxyacyl-[ACP] = a UDP-2-N,3-O-bis[(3R)-3-hydroxyacyl]-alpha-D-glucosamine + holo-[ACP] + H(+)</text>
        <dbReference type="Rhea" id="RHEA:53836"/>
        <dbReference type="Rhea" id="RHEA-COMP:9685"/>
        <dbReference type="Rhea" id="RHEA-COMP:9945"/>
        <dbReference type="ChEBI" id="CHEBI:15378"/>
        <dbReference type="ChEBI" id="CHEBI:64479"/>
        <dbReference type="ChEBI" id="CHEBI:78827"/>
        <dbReference type="ChEBI" id="CHEBI:137740"/>
        <dbReference type="ChEBI" id="CHEBI:137748"/>
        <dbReference type="EC" id="2.3.1.191"/>
    </reaction>
</comment>
<comment type="pathway">
    <text evidence="1">Bacterial outer membrane biogenesis; LPS lipid A biosynthesis.</text>
</comment>
<comment type="subunit">
    <text evidence="1">Homotrimer.</text>
</comment>
<comment type="similarity">
    <text evidence="1">Belongs to the transferase hexapeptide repeat family. LpxD subfamily.</text>
</comment>
<sequence>MIPATCTLSQITARLGGEWRGEDISVTAVRPLADAQAEHISFLANPKYKAEVHDSSAGAIIVSAKAADGFEGRNLIVADDPYLYFAKVARLFSPVVKARGGIHPTAVVEPGATVPASCEIGANAYIGANTVLGEGCRILANAVVQHDCKLGDEVVLHPNAVVYYGCTLGRHVEIHSGAVIGADGFGLAFAGDSWFKIPQTGAVTLGDDVEIGSNTNIDRGAMSDTTVGNGTKIDNQVQIGHNCKIGSHTVIAAKTGISGSVTIGSYCIIGGGVGTVGHIEIADKTTIGGGTSVTHSITESGKHLAGIFPMSEHKEWARNAVYIHRLSEMNKRLKTLEQQLSDSKDTQ</sequence>
<keyword id="KW-0012">Acyltransferase</keyword>
<keyword id="KW-0441">Lipid A biosynthesis</keyword>
<keyword id="KW-0444">Lipid biosynthesis</keyword>
<keyword id="KW-0443">Lipid metabolism</keyword>
<keyword id="KW-1185">Reference proteome</keyword>
<keyword id="KW-0677">Repeat</keyword>
<keyword id="KW-0808">Transferase</keyword>
<feature type="chain" id="PRO_0000264398" description="UDP-3-O-acylglucosamine N-acyltransferase">
    <location>
        <begin position="1"/>
        <end position="347"/>
    </location>
</feature>
<feature type="active site" description="Proton acceptor" evidence="1">
    <location>
        <position position="241"/>
    </location>
</feature>
<name>LPXD_NEIG1</name>
<accession>Q5F5W6</accession>
<organism>
    <name type="scientific">Neisseria gonorrhoeae (strain ATCC 700825 / FA 1090)</name>
    <dbReference type="NCBI Taxonomy" id="242231"/>
    <lineage>
        <taxon>Bacteria</taxon>
        <taxon>Pseudomonadati</taxon>
        <taxon>Pseudomonadota</taxon>
        <taxon>Betaproteobacteria</taxon>
        <taxon>Neisseriales</taxon>
        <taxon>Neisseriaceae</taxon>
        <taxon>Neisseria</taxon>
    </lineage>
</organism>
<gene>
    <name evidence="1" type="primary">lpxD</name>
    <name type="ordered locus">NGO_1803</name>
</gene>
<dbReference type="EC" id="2.3.1.191" evidence="1"/>
<dbReference type="EMBL" id="AE004969">
    <property type="protein sequence ID" value="AAW90421.1"/>
    <property type="molecule type" value="Genomic_DNA"/>
</dbReference>
<dbReference type="RefSeq" id="WP_003694315.1">
    <property type="nucleotide sequence ID" value="NC_002946.2"/>
</dbReference>
<dbReference type="RefSeq" id="YP_208833.1">
    <property type="nucleotide sequence ID" value="NC_002946.2"/>
</dbReference>
<dbReference type="SMR" id="Q5F5W6"/>
<dbReference type="STRING" id="242231.NGO_1803"/>
<dbReference type="KEGG" id="ngo:NGO_1803"/>
<dbReference type="PATRIC" id="fig|242231.10.peg.2163"/>
<dbReference type="HOGENOM" id="CLU_049865_0_0_4"/>
<dbReference type="UniPathway" id="UPA00973"/>
<dbReference type="Proteomes" id="UP000000535">
    <property type="component" value="Chromosome"/>
</dbReference>
<dbReference type="GO" id="GO:0016020">
    <property type="term" value="C:membrane"/>
    <property type="evidence" value="ECO:0007669"/>
    <property type="project" value="GOC"/>
</dbReference>
<dbReference type="GO" id="GO:0016410">
    <property type="term" value="F:N-acyltransferase activity"/>
    <property type="evidence" value="ECO:0007669"/>
    <property type="project" value="InterPro"/>
</dbReference>
<dbReference type="GO" id="GO:0009245">
    <property type="term" value="P:lipid A biosynthetic process"/>
    <property type="evidence" value="ECO:0007669"/>
    <property type="project" value="UniProtKB-UniRule"/>
</dbReference>
<dbReference type="CDD" id="cd03352">
    <property type="entry name" value="LbH_LpxD"/>
    <property type="match status" value="1"/>
</dbReference>
<dbReference type="Gene3D" id="1.20.5.170">
    <property type="match status" value="1"/>
</dbReference>
<dbReference type="Gene3D" id="2.160.10.10">
    <property type="entry name" value="Hexapeptide repeat proteins"/>
    <property type="match status" value="1"/>
</dbReference>
<dbReference type="Gene3D" id="3.40.1390.10">
    <property type="entry name" value="MurE/MurF, N-terminal domain"/>
    <property type="match status" value="1"/>
</dbReference>
<dbReference type="HAMAP" id="MF_00523">
    <property type="entry name" value="LpxD"/>
    <property type="match status" value="1"/>
</dbReference>
<dbReference type="InterPro" id="IPR001451">
    <property type="entry name" value="Hexapep"/>
</dbReference>
<dbReference type="InterPro" id="IPR018357">
    <property type="entry name" value="Hexapep_transf_CS"/>
</dbReference>
<dbReference type="InterPro" id="IPR007691">
    <property type="entry name" value="LpxD"/>
</dbReference>
<dbReference type="InterPro" id="IPR011004">
    <property type="entry name" value="Trimer_LpxA-like_sf"/>
</dbReference>
<dbReference type="InterPro" id="IPR020573">
    <property type="entry name" value="UDP_GlcNAc_AcTrfase_non-rep"/>
</dbReference>
<dbReference type="NCBIfam" id="TIGR01853">
    <property type="entry name" value="lipid_A_lpxD"/>
    <property type="match status" value="1"/>
</dbReference>
<dbReference type="NCBIfam" id="NF002060">
    <property type="entry name" value="PRK00892.1"/>
    <property type="match status" value="1"/>
</dbReference>
<dbReference type="PANTHER" id="PTHR43378">
    <property type="entry name" value="UDP-3-O-ACYLGLUCOSAMINE N-ACYLTRANSFERASE"/>
    <property type="match status" value="1"/>
</dbReference>
<dbReference type="PANTHER" id="PTHR43378:SF2">
    <property type="entry name" value="UDP-3-O-ACYLGLUCOSAMINE N-ACYLTRANSFERASE 1, MITOCHONDRIAL-RELATED"/>
    <property type="match status" value="1"/>
</dbReference>
<dbReference type="Pfam" id="PF00132">
    <property type="entry name" value="Hexapep"/>
    <property type="match status" value="2"/>
</dbReference>
<dbReference type="Pfam" id="PF04613">
    <property type="entry name" value="LpxD"/>
    <property type="match status" value="1"/>
</dbReference>
<dbReference type="SUPFAM" id="SSF51161">
    <property type="entry name" value="Trimeric LpxA-like enzymes"/>
    <property type="match status" value="1"/>
</dbReference>
<dbReference type="PROSITE" id="PS00101">
    <property type="entry name" value="HEXAPEP_TRANSFERASES"/>
    <property type="match status" value="1"/>
</dbReference>